<protein>
    <recommendedName>
        <fullName evidence="1">Deoxyuridine 5'-triphosphate nucleotidohydrolase</fullName>
        <shortName evidence="1">dUTPase</shortName>
        <ecNumber evidence="1">3.6.1.23</ecNumber>
    </recommendedName>
    <alternativeName>
        <fullName evidence="1">dUTP pyrophosphatase</fullName>
    </alternativeName>
</protein>
<name>DUT_PHOLL</name>
<feature type="chain" id="PRO_0000182891" description="Deoxyuridine 5'-triphosphate nucleotidohydrolase">
    <location>
        <begin position="1"/>
        <end position="152"/>
    </location>
</feature>
<feature type="binding site" evidence="1">
    <location>
        <begin position="71"/>
        <end position="73"/>
    </location>
    <ligand>
        <name>substrate</name>
    </ligand>
</feature>
<feature type="binding site" evidence="1">
    <location>
        <position position="84"/>
    </location>
    <ligand>
        <name>substrate</name>
    </ligand>
</feature>
<feature type="binding site" evidence="1">
    <location>
        <begin position="88"/>
        <end position="90"/>
    </location>
    <ligand>
        <name>substrate</name>
    </ligand>
</feature>
<feature type="binding site" evidence="1">
    <location>
        <position position="98"/>
    </location>
    <ligand>
        <name>substrate</name>
    </ligand>
</feature>
<gene>
    <name evidence="1" type="primary">dut</name>
    <name type="ordered locus">plu4867</name>
</gene>
<reference key="1">
    <citation type="journal article" date="2003" name="Nat. Biotechnol.">
        <title>The genome sequence of the entomopathogenic bacterium Photorhabdus luminescens.</title>
        <authorList>
            <person name="Duchaud E."/>
            <person name="Rusniok C."/>
            <person name="Frangeul L."/>
            <person name="Buchrieser C."/>
            <person name="Givaudan A."/>
            <person name="Taourit S."/>
            <person name="Bocs S."/>
            <person name="Boursaux-Eude C."/>
            <person name="Chandler M."/>
            <person name="Charles J.-F."/>
            <person name="Dassa E."/>
            <person name="Derose R."/>
            <person name="Derzelle S."/>
            <person name="Freyssinet G."/>
            <person name="Gaudriault S."/>
            <person name="Medigue C."/>
            <person name="Lanois A."/>
            <person name="Powell K."/>
            <person name="Siguier P."/>
            <person name="Vincent R."/>
            <person name="Wingate V."/>
            <person name="Zouine M."/>
            <person name="Glaser P."/>
            <person name="Boemare N."/>
            <person name="Danchin A."/>
            <person name="Kunst F."/>
        </authorList>
    </citation>
    <scope>NUCLEOTIDE SEQUENCE [LARGE SCALE GENOMIC DNA]</scope>
    <source>
        <strain>DSM 15139 / CIP 105565 / TT01</strain>
    </source>
</reference>
<evidence type="ECO:0000255" key="1">
    <source>
        <dbReference type="HAMAP-Rule" id="MF_00116"/>
    </source>
</evidence>
<organism>
    <name type="scientific">Photorhabdus laumondii subsp. laumondii (strain DSM 15139 / CIP 105565 / TT01)</name>
    <name type="common">Photorhabdus luminescens subsp. laumondii</name>
    <dbReference type="NCBI Taxonomy" id="243265"/>
    <lineage>
        <taxon>Bacteria</taxon>
        <taxon>Pseudomonadati</taxon>
        <taxon>Pseudomonadota</taxon>
        <taxon>Gammaproteobacteria</taxon>
        <taxon>Enterobacterales</taxon>
        <taxon>Morganellaceae</taxon>
        <taxon>Photorhabdus</taxon>
    </lineage>
</organism>
<comment type="function">
    <text evidence="1">This enzyme is involved in nucleotide metabolism: it produces dUMP, the immediate precursor of thymidine nucleotides and it decreases the intracellular concentration of dUTP so that uracil cannot be incorporated into DNA.</text>
</comment>
<comment type="catalytic activity">
    <reaction evidence="1">
        <text>dUTP + H2O = dUMP + diphosphate + H(+)</text>
        <dbReference type="Rhea" id="RHEA:10248"/>
        <dbReference type="ChEBI" id="CHEBI:15377"/>
        <dbReference type="ChEBI" id="CHEBI:15378"/>
        <dbReference type="ChEBI" id="CHEBI:33019"/>
        <dbReference type="ChEBI" id="CHEBI:61555"/>
        <dbReference type="ChEBI" id="CHEBI:246422"/>
        <dbReference type="EC" id="3.6.1.23"/>
    </reaction>
</comment>
<comment type="cofactor">
    <cofactor evidence="1">
        <name>Mg(2+)</name>
        <dbReference type="ChEBI" id="CHEBI:18420"/>
    </cofactor>
</comment>
<comment type="pathway">
    <text evidence="1">Pyrimidine metabolism; dUMP biosynthesis; dUMP from dCTP (dUTP route): step 2/2.</text>
</comment>
<comment type="similarity">
    <text evidence="1">Belongs to the dUTPase family.</text>
</comment>
<keyword id="KW-0378">Hydrolase</keyword>
<keyword id="KW-0460">Magnesium</keyword>
<keyword id="KW-0479">Metal-binding</keyword>
<keyword id="KW-0546">Nucleotide metabolism</keyword>
<keyword id="KW-1185">Reference proteome</keyword>
<proteinExistence type="inferred from homology"/>
<sequence>MMKKIDVKILDPRIGEEFPLPTYATPGSAGLDLRACLDNAVELAPGQTELLPTGLAIHIGDEQLAAVILPRSGLGHKHGVVLGNLVGLIDSDYQGQLMVSVWNRGDKAFTIQPGERIAQIVFVPVVQAEFNLVEDFETSERGSGGFGHSGRQ</sequence>
<dbReference type="EC" id="3.6.1.23" evidence="1"/>
<dbReference type="EMBL" id="BX571875">
    <property type="protein sequence ID" value="CAE17239.1"/>
    <property type="molecule type" value="Genomic_DNA"/>
</dbReference>
<dbReference type="RefSeq" id="WP_011148924.1">
    <property type="nucleotide sequence ID" value="NC_005126.1"/>
</dbReference>
<dbReference type="SMR" id="Q7MAX3"/>
<dbReference type="STRING" id="243265.plu4867"/>
<dbReference type="GeneID" id="48851096"/>
<dbReference type="KEGG" id="plu:plu4867"/>
<dbReference type="eggNOG" id="COG0756">
    <property type="taxonomic scope" value="Bacteria"/>
</dbReference>
<dbReference type="HOGENOM" id="CLU_068508_1_1_6"/>
<dbReference type="OrthoDB" id="9809956at2"/>
<dbReference type="UniPathway" id="UPA00610">
    <property type="reaction ID" value="UER00666"/>
</dbReference>
<dbReference type="Proteomes" id="UP000002514">
    <property type="component" value="Chromosome"/>
</dbReference>
<dbReference type="GO" id="GO:0004170">
    <property type="term" value="F:dUTP diphosphatase activity"/>
    <property type="evidence" value="ECO:0007669"/>
    <property type="project" value="UniProtKB-UniRule"/>
</dbReference>
<dbReference type="GO" id="GO:0000287">
    <property type="term" value="F:magnesium ion binding"/>
    <property type="evidence" value="ECO:0007669"/>
    <property type="project" value="UniProtKB-UniRule"/>
</dbReference>
<dbReference type="GO" id="GO:0006226">
    <property type="term" value="P:dUMP biosynthetic process"/>
    <property type="evidence" value="ECO:0007669"/>
    <property type="project" value="UniProtKB-UniRule"/>
</dbReference>
<dbReference type="GO" id="GO:0046081">
    <property type="term" value="P:dUTP catabolic process"/>
    <property type="evidence" value="ECO:0007669"/>
    <property type="project" value="InterPro"/>
</dbReference>
<dbReference type="CDD" id="cd07557">
    <property type="entry name" value="trimeric_dUTPase"/>
    <property type="match status" value="1"/>
</dbReference>
<dbReference type="FunFam" id="2.70.40.10:FF:000002">
    <property type="entry name" value="dUTP diphosphatase"/>
    <property type="match status" value="1"/>
</dbReference>
<dbReference type="Gene3D" id="2.70.40.10">
    <property type="match status" value="1"/>
</dbReference>
<dbReference type="HAMAP" id="MF_00116">
    <property type="entry name" value="dUTPase_bact"/>
    <property type="match status" value="1"/>
</dbReference>
<dbReference type="InterPro" id="IPR008181">
    <property type="entry name" value="dUTPase"/>
</dbReference>
<dbReference type="InterPro" id="IPR029054">
    <property type="entry name" value="dUTPase-like"/>
</dbReference>
<dbReference type="InterPro" id="IPR036157">
    <property type="entry name" value="dUTPase-like_sf"/>
</dbReference>
<dbReference type="InterPro" id="IPR033704">
    <property type="entry name" value="dUTPase_trimeric"/>
</dbReference>
<dbReference type="NCBIfam" id="TIGR00576">
    <property type="entry name" value="dut"/>
    <property type="match status" value="1"/>
</dbReference>
<dbReference type="NCBIfam" id="NF001862">
    <property type="entry name" value="PRK00601.1"/>
    <property type="match status" value="1"/>
</dbReference>
<dbReference type="PANTHER" id="PTHR11241">
    <property type="entry name" value="DEOXYURIDINE 5'-TRIPHOSPHATE NUCLEOTIDOHYDROLASE"/>
    <property type="match status" value="1"/>
</dbReference>
<dbReference type="PANTHER" id="PTHR11241:SF0">
    <property type="entry name" value="DEOXYURIDINE 5'-TRIPHOSPHATE NUCLEOTIDOHYDROLASE"/>
    <property type="match status" value="1"/>
</dbReference>
<dbReference type="Pfam" id="PF00692">
    <property type="entry name" value="dUTPase"/>
    <property type="match status" value="1"/>
</dbReference>
<dbReference type="SUPFAM" id="SSF51283">
    <property type="entry name" value="dUTPase-like"/>
    <property type="match status" value="1"/>
</dbReference>
<accession>Q7MAX3</accession>